<proteinExistence type="inferred from homology"/>
<feature type="chain" id="PRO_0000409626" description="Signal transduction protein MDG1">
    <location>
        <begin position="1"/>
        <end position="366"/>
    </location>
</feature>
<feature type="region of interest" description="Disordered" evidence="3">
    <location>
        <begin position="159"/>
        <end position="180"/>
    </location>
</feature>
<feature type="region of interest" description="Disordered" evidence="3">
    <location>
        <begin position="217"/>
        <end position="366"/>
    </location>
</feature>
<feature type="compositionally biased region" description="Acidic residues" evidence="3">
    <location>
        <begin position="233"/>
        <end position="247"/>
    </location>
</feature>
<feature type="compositionally biased region" description="Basic and acidic residues" evidence="3">
    <location>
        <begin position="265"/>
        <end position="284"/>
    </location>
</feature>
<feature type="modified residue" description="Phosphoserine" evidence="2">
    <location>
        <position position="160"/>
    </location>
</feature>
<feature type="modified residue" description="Phosphothreonine" evidence="2">
    <location>
        <position position="216"/>
    </location>
</feature>
<feature type="modified residue" description="Phosphoserine" evidence="2">
    <location>
        <position position="288"/>
    </location>
</feature>
<feature type="cross-link" description="Glycyl lysine isopeptide (Lys-Gly) (interchain with G-Cter in ubiquitin)" evidence="2">
    <location>
        <position position="314"/>
    </location>
</feature>
<comment type="function">
    <text evidence="1">Involved in G-protein mediated signal transduction and in the regulation of polarized cell growth in pheromone-induced cells.</text>
</comment>
<comment type="subcellular location">
    <subcellularLocation>
        <location evidence="1">Cell membrane</location>
        <topology evidence="1">Peripheral membrane protein</topology>
    </subcellularLocation>
</comment>
<comment type="similarity">
    <text evidence="4">Belongs to the CRP1/MDG1 family.</text>
</comment>
<keyword id="KW-1003">Cell membrane</keyword>
<keyword id="KW-1017">Isopeptide bond</keyword>
<keyword id="KW-0472">Membrane</keyword>
<keyword id="KW-0597">Phosphoprotein</keyword>
<keyword id="KW-0832">Ubl conjugation</keyword>
<dbReference type="EMBL" id="FN393086">
    <property type="protein sequence ID" value="CAY82428.1"/>
    <property type="molecule type" value="Genomic_DNA"/>
</dbReference>
<dbReference type="SMR" id="C8ZG55"/>
<dbReference type="CAZy" id="CBM48">
    <property type="family name" value="Carbohydrate-Binding Module Family 48"/>
</dbReference>
<dbReference type="HOGENOM" id="CLU_765367_0_0_1"/>
<dbReference type="OrthoDB" id="40992at4893"/>
<dbReference type="Proteomes" id="UP000000286">
    <property type="component" value="Chromosome XIV, Scaffold EC1118_1N9"/>
</dbReference>
<dbReference type="GO" id="GO:0005737">
    <property type="term" value="C:cytoplasm"/>
    <property type="evidence" value="ECO:0007669"/>
    <property type="project" value="TreeGrafter"/>
</dbReference>
<dbReference type="GO" id="GO:0031588">
    <property type="term" value="C:nucleotide-activated protein kinase complex"/>
    <property type="evidence" value="ECO:0007669"/>
    <property type="project" value="TreeGrafter"/>
</dbReference>
<dbReference type="GO" id="GO:0005634">
    <property type="term" value="C:nucleus"/>
    <property type="evidence" value="ECO:0007669"/>
    <property type="project" value="TreeGrafter"/>
</dbReference>
<dbReference type="GO" id="GO:0005886">
    <property type="term" value="C:plasma membrane"/>
    <property type="evidence" value="ECO:0007669"/>
    <property type="project" value="UniProtKB-SubCell"/>
</dbReference>
<dbReference type="GO" id="GO:0019901">
    <property type="term" value="F:protein kinase binding"/>
    <property type="evidence" value="ECO:0007669"/>
    <property type="project" value="TreeGrafter"/>
</dbReference>
<dbReference type="GO" id="GO:0007165">
    <property type="term" value="P:signal transduction"/>
    <property type="evidence" value="ECO:0007669"/>
    <property type="project" value="TreeGrafter"/>
</dbReference>
<dbReference type="CDD" id="cd02859">
    <property type="entry name" value="E_set_AMPKbeta_like_N"/>
    <property type="match status" value="1"/>
</dbReference>
<dbReference type="Gene3D" id="2.60.40.10">
    <property type="entry name" value="Immunoglobulins"/>
    <property type="match status" value="1"/>
</dbReference>
<dbReference type="InterPro" id="IPR032640">
    <property type="entry name" value="AMPK1_CBM"/>
</dbReference>
<dbReference type="InterPro" id="IPR050827">
    <property type="entry name" value="CRP1_MDG1_kinase"/>
</dbReference>
<dbReference type="InterPro" id="IPR013783">
    <property type="entry name" value="Ig-like_fold"/>
</dbReference>
<dbReference type="InterPro" id="IPR014756">
    <property type="entry name" value="Ig_E-set"/>
</dbReference>
<dbReference type="PANTHER" id="PTHR10343">
    <property type="entry name" value="5'-AMP-ACTIVATED PROTEIN KINASE , BETA SUBUNIT"/>
    <property type="match status" value="1"/>
</dbReference>
<dbReference type="PANTHER" id="PTHR10343:SF81">
    <property type="entry name" value="CRUCIFORM DNA-RECOGNIZING PROTEIN 1-RELATED"/>
    <property type="match status" value="1"/>
</dbReference>
<dbReference type="Pfam" id="PF16561">
    <property type="entry name" value="AMPK1_CBM"/>
    <property type="match status" value="1"/>
</dbReference>
<dbReference type="SUPFAM" id="SSF81296">
    <property type="entry name" value="E set domains"/>
    <property type="match status" value="1"/>
</dbReference>
<reference key="1">
    <citation type="journal article" date="2009" name="Proc. Natl. Acad. Sci. U.S.A.">
        <title>Eukaryote-to-eukaryote gene transfer events revealed by the genome sequence of the wine yeast Saccharomyces cerevisiae EC1118.</title>
        <authorList>
            <person name="Novo M."/>
            <person name="Bigey F."/>
            <person name="Beyne E."/>
            <person name="Galeote V."/>
            <person name="Gavory F."/>
            <person name="Mallet S."/>
            <person name="Cambon B."/>
            <person name="Legras J.-L."/>
            <person name="Wincker P."/>
            <person name="Casaregola S."/>
            <person name="Dequin S."/>
        </authorList>
    </citation>
    <scope>NUCLEOTIDE SEQUENCE [LARGE SCALE GENOMIC DNA]</scope>
    <source>
        <strain>Lalvin EC1118 / Prise de mousse</strain>
    </source>
</reference>
<accession>C8ZG55</accession>
<protein>
    <recommendedName>
        <fullName>Signal transduction protein MDG1</fullName>
    </recommendedName>
    <alternativeName>
        <fullName>Multicopy suppressor of defective G-protein 1</fullName>
    </alternativeName>
</protein>
<sequence length="366" mass="40278">MQSSLPQFTFKWPKGPEAIILTGTFDDWKGTLPMVKDPSGAFEITLPVTFDSPSSKFYFKFIVDGQWLPSKDYKVNIDEGVENNFITEEDVIKQRENGSSTLVPESAGLAVSKNAPLIEPEAEKRAKKLRKFKIKRVIKTNKQTGERSIFSQEVVELPDSEDETQQVNKTGKNADGLSGTTTIIENNVGVNEEKAIKPYEENHPKVNLVKSEGYVTDGLGKTQSSESRLYELSAEDLEKEEEEEDEDKGGGKDTSTSADAEASEDQNKEPLSKSAKFEKPEEKVPVSSITSHAKETSVKPTGKVATETQTYETKQGAPTAAAKKIEAKKATRPSKPKGTKETPNKGVQKNPAKNGGFFKKLAQLLK</sequence>
<name>MDG1_YEAS8</name>
<evidence type="ECO:0000250" key="1"/>
<evidence type="ECO:0000250" key="2">
    <source>
        <dbReference type="UniProtKB" id="P53885"/>
    </source>
</evidence>
<evidence type="ECO:0000256" key="3">
    <source>
        <dbReference type="SAM" id="MobiDB-lite"/>
    </source>
</evidence>
<evidence type="ECO:0000305" key="4"/>
<organism>
    <name type="scientific">Saccharomyces cerevisiae (strain Lalvin EC1118 / Prise de mousse)</name>
    <name type="common">Baker's yeast</name>
    <dbReference type="NCBI Taxonomy" id="643680"/>
    <lineage>
        <taxon>Eukaryota</taxon>
        <taxon>Fungi</taxon>
        <taxon>Dikarya</taxon>
        <taxon>Ascomycota</taxon>
        <taxon>Saccharomycotina</taxon>
        <taxon>Saccharomycetes</taxon>
        <taxon>Saccharomycetales</taxon>
        <taxon>Saccharomycetaceae</taxon>
        <taxon>Saccharomyces</taxon>
    </lineage>
</organism>
<gene>
    <name type="primary">MDG1</name>
    <name type="ORF">EC1118_1N9_1761g</name>
</gene>